<dbReference type="EC" id="1.17.7.3" evidence="1"/>
<dbReference type="EMBL" id="CP000057">
    <property type="protein sequence ID" value="AAX87423.1"/>
    <property type="molecule type" value="Genomic_DNA"/>
</dbReference>
<dbReference type="RefSeq" id="WP_011272008.1">
    <property type="nucleotide sequence ID" value="NC_007146.2"/>
</dbReference>
<dbReference type="SMR" id="Q4QNH4"/>
<dbReference type="GeneID" id="93219314"/>
<dbReference type="KEGG" id="hit:NTHI0488"/>
<dbReference type="HOGENOM" id="CLU_042258_0_0_6"/>
<dbReference type="UniPathway" id="UPA00056">
    <property type="reaction ID" value="UER00096"/>
</dbReference>
<dbReference type="Proteomes" id="UP000002525">
    <property type="component" value="Chromosome"/>
</dbReference>
<dbReference type="GO" id="GO:0051539">
    <property type="term" value="F:4 iron, 4 sulfur cluster binding"/>
    <property type="evidence" value="ECO:0007669"/>
    <property type="project" value="UniProtKB-UniRule"/>
</dbReference>
<dbReference type="GO" id="GO:0046429">
    <property type="term" value="F:4-hydroxy-3-methylbut-2-en-1-yl diphosphate synthase activity (ferredoxin)"/>
    <property type="evidence" value="ECO:0007669"/>
    <property type="project" value="UniProtKB-UniRule"/>
</dbReference>
<dbReference type="GO" id="GO:0141197">
    <property type="term" value="F:4-hydroxy-3-methylbut-2-enyl-diphosphate synthase activity (flavodoxin)"/>
    <property type="evidence" value="ECO:0007669"/>
    <property type="project" value="UniProtKB-EC"/>
</dbReference>
<dbReference type="GO" id="GO:0005506">
    <property type="term" value="F:iron ion binding"/>
    <property type="evidence" value="ECO:0007669"/>
    <property type="project" value="InterPro"/>
</dbReference>
<dbReference type="GO" id="GO:0019288">
    <property type="term" value="P:isopentenyl diphosphate biosynthetic process, methylerythritol 4-phosphate pathway"/>
    <property type="evidence" value="ECO:0007669"/>
    <property type="project" value="UniProtKB-UniRule"/>
</dbReference>
<dbReference type="GO" id="GO:0016114">
    <property type="term" value="P:terpenoid biosynthetic process"/>
    <property type="evidence" value="ECO:0007669"/>
    <property type="project" value="InterPro"/>
</dbReference>
<dbReference type="FunFam" id="3.20.20.20:FF:000001">
    <property type="entry name" value="4-hydroxy-3-methylbut-2-en-1-yl diphosphate synthase (flavodoxin)"/>
    <property type="match status" value="1"/>
</dbReference>
<dbReference type="FunFam" id="3.30.413.10:FF:000002">
    <property type="entry name" value="4-hydroxy-3-methylbut-2-en-1-yl diphosphate synthase (flavodoxin)"/>
    <property type="match status" value="1"/>
</dbReference>
<dbReference type="Gene3D" id="3.20.20.20">
    <property type="entry name" value="Dihydropteroate synthase-like"/>
    <property type="match status" value="1"/>
</dbReference>
<dbReference type="Gene3D" id="3.30.413.10">
    <property type="entry name" value="Sulfite Reductase Hemoprotein, domain 1"/>
    <property type="match status" value="1"/>
</dbReference>
<dbReference type="HAMAP" id="MF_00159">
    <property type="entry name" value="IspG"/>
    <property type="match status" value="1"/>
</dbReference>
<dbReference type="InterPro" id="IPR011005">
    <property type="entry name" value="Dihydropteroate_synth-like_sf"/>
</dbReference>
<dbReference type="InterPro" id="IPR016425">
    <property type="entry name" value="IspG_bac"/>
</dbReference>
<dbReference type="InterPro" id="IPR004588">
    <property type="entry name" value="IspG_bac-typ"/>
</dbReference>
<dbReference type="InterPro" id="IPR045854">
    <property type="entry name" value="NO2/SO3_Rdtase_4Fe4S_sf"/>
</dbReference>
<dbReference type="NCBIfam" id="TIGR00612">
    <property type="entry name" value="ispG_gcpE"/>
    <property type="match status" value="1"/>
</dbReference>
<dbReference type="NCBIfam" id="NF001540">
    <property type="entry name" value="PRK00366.1"/>
    <property type="match status" value="1"/>
</dbReference>
<dbReference type="PANTHER" id="PTHR30454">
    <property type="entry name" value="4-HYDROXY-3-METHYLBUT-2-EN-1-YL DIPHOSPHATE SYNTHASE"/>
    <property type="match status" value="1"/>
</dbReference>
<dbReference type="PANTHER" id="PTHR30454:SF0">
    <property type="entry name" value="4-HYDROXY-3-METHYLBUT-2-EN-1-YL DIPHOSPHATE SYNTHASE (FERREDOXIN), CHLOROPLASTIC"/>
    <property type="match status" value="1"/>
</dbReference>
<dbReference type="Pfam" id="PF04551">
    <property type="entry name" value="GcpE"/>
    <property type="match status" value="1"/>
</dbReference>
<dbReference type="PIRSF" id="PIRSF004640">
    <property type="entry name" value="IspG"/>
    <property type="match status" value="1"/>
</dbReference>
<dbReference type="SUPFAM" id="SSF51717">
    <property type="entry name" value="Dihydropteroate synthetase-like"/>
    <property type="match status" value="1"/>
</dbReference>
<dbReference type="SUPFAM" id="SSF56014">
    <property type="entry name" value="Nitrite and sulphite reductase 4Fe-4S domain-like"/>
    <property type="match status" value="1"/>
</dbReference>
<accession>Q4QNH4</accession>
<name>ISPG_HAEI8</name>
<organism>
    <name type="scientific">Haemophilus influenzae (strain 86-028NP)</name>
    <dbReference type="NCBI Taxonomy" id="281310"/>
    <lineage>
        <taxon>Bacteria</taxon>
        <taxon>Pseudomonadati</taxon>
        <taxon>Pseudomonadota</taxon>
        <taxon>Gammaproteobacteria</taxon>
        <taxon>Pasteurellales</taxon>
        <taxon>Pasteurellaceae</taxon>
        <taxon>Haemophilus</taxon>
    </lineage>
</organism>
<sequence>MSAFQPTIKRRESTKIYVGNVPIGGDAPIAVQSMTNTRTTDVEATVAQIKSLERVGADIVRVSVPTMDAAEAFKQIKQQVNVPLVADIHFDYRIALKVAEYGVDCLRINPGNIGREDRVRAVVDCAQDKNIPIRIGVNAGSLEKDLQEKYGEPTPEALLESALRHVEILDRLNFDQFKVSVKASDVFLAVESYRLLAKAIKQPLHLGITEAGGARAGAVKSAVGLGMLLAEGIGDTLRISLAADPIEEIKVGFDILKSLRIRSRGINFIACPTCSRQEFDVIGTVNALEQRLEDIITPMDVSIIGCVVNGPGEALISDLGVTGGNKKSGYYLDGERQKERFDNEDIVNQLEAKIRAKVARQDPKNRII</sequence>
<proteinExistence type="inferred from homology"/>
<evidence type="ECO:0000255" key="1">
    <source>
        <dbReference type="HAMAP-Rule" id="MF_00159"/>
    </source>
</evidence>
<gene>
    <name evidence="1" type="primary">ispG</name>
    <name type="ordered locus">NTHI0488</name>
</gene>
<comment type="function">
    <text evidence="1">Converts 2C-methyl-D-erythritol 2,4-cyclodiphosphate (ME-2,4cPP) into 1-hydroxy-2-methyl-2-(E)-butenyl 4-diphosphate.</text>
</comment>
<comment type="catalytic activity">
    <reaction evidence="1">
        <text>(2E)-4-hydroxy-3-methylbut-2-enyl diphosphate + oxidized [flavodoxin] + H2O + 2 H(+) = 2-C-methyl-D-erythritol 2,4-cyclic diphosphate + reduced [flavodoxin]</text>
        <dbReference type="Rhea" id="RHEA:43604"/>
        <dbReference type="Rhea" id="RHEA-COMP:10622"/>
        <dbReference type="Rhea" id="RHEA-COMP:10623"/>
        <dbReference type="ChEBI" id="CHEBI:15377"/>
        <dbReference type="ChEBI" id="CHEBI:15378"/>
        <dbReference type="ChEBI" id="CHEBI:57618"/>
        <dbReference type="ChEBI" id="CHEBI:58210"/>
        <dbReference type="ChEBI" id="CHEBI:58483"/>
        <dbReference type="ChEBI" id="CHEBI:128753"/>
        <dbReference type="EC" id="1.17.7.3"/>
    </reaction>
</comment>
<comment type="cofactor">
    <cofactor evidence="1">
        <name>[4Fe-4S] cluster</name>
        <dbReference type="ChEBI" id="CHEBI:49883"/>
    </cofactor>
    <text evidence="1">Binds 1 [4Fe-4S] cluster.</text>
</comment>
<comment type="pathway">
    <text evidence="1">Isoprenoid biosynthesis; isopentenyl diphosphate biosynthesis via DXP pathway; isopentenyl diphosphate from 1-deoxy-D-xylulose 5-phosphate: step 5/6.</text>
</comment>
<comment type="similarity">
    <text evidence="1">Belongs to the IspG family.</text>
</comment>
<protein>
    <recommendedName>
        <fullName evidence="1">4-hydroxy-3-methylbut-2-en-1-yl diphosphate synthase (flavodoxin)</fullName>
        <ecNumber evidence="1">1.17.7.3</ecNumber>
    </recommendedName>
    <alternativeName>
        <fullName evidence="1">1-hydroxy-2-methyl-2-(E)-butenyl 4-diphosphate synthase</fullName>
    </alternativeName>
</protein>
<feature type="chain" id="PRO_1000011470" description="4-hydroxy-3-methylbut-2-en-1-yl diphosphate synthase (flavodoxin)">
    <location>
        <begin position="1"/>
        <end position="368"/>
    </location>
</feature>
<feature type="binding site" evidence="1">
    <location>
        <position position="271"/>
    </location>
    <ligand>
        <name>[4Fe-4S] cluster</name>
        <dbReference type="ChEBI" id="CHEBI:49883"/>
    </ligand>
</feature>
<feature type="binding site" evidence="1">
    <location>
        <position position="274"/>
    </location>
    <ligand>
        <name>[4Fe-4S] cluster</name>
        <dbReference type="ChEBI" id="CHEBI:49883"/>
    </ligand>
</feature>
<feature type="binding site" evidence="1">
    <location>
        <position position="306"/>
    </location>
    <ligand>
        <name>[4Fe-4S] cluster</name>
        <dbReference type="ChEBI" id="CHEBI:49883"/>
    </ligand>
</feature>
<feature type="binding site" evidence="1">
    <location>
        <position position="313"/>
    </location>
    <ligand>
        <name>[4Fe-4S] cluster</name>
        <dbReference type="ChEBI" id="CHEBI:49883"/>
    </ligand>
</feature>
<reference key="1">
    <citation type="journal article" date="2005" name="J. Bacteriol.">
        <title>Genomic sequence of an otitis media isolate of nontypeable Haemophilus influenzae: comparative study with H. influenzae serotype d, strain KW20.</title>
        <authorList>
            <person name="Harrison A."/>
            <person name="Dyer D.W."/>
            <person name="Gillaspy A."/>
            <person name="Ray W.C."/>
            <person name="Mungur R."/>
            <person name="Carson M.B."/>
            <person name="Zhong H."/>
            <person name="Gipson J."/>
            <person name="Gipson M."/>
            <person name="Johnson L.S."/>
            <person name="Lewis L."/>
            <person name="Bakaletz L.O."/>
            <person name="Munson R.S. Jr."/>
        </authorList>
    </citation>
    <scope>NUCLEOTIDE SEQUENCE [LARGE SCALE GENOMIC DNA]</scope>
    <source>
        <strain>86-028NP</strain>
    </source>
</reference>
<keyword id="KW-0004">4Fe-4S</keyword>
<keyword id="KW-0408">Iron</keyword>
<keyword id="KW-0411">Iron-sulfur</keyword>
<keyword id="KW-0414">Isoprene biosynthesis</keyword>
<keyword id="KW-0479">Metal-binding</keyword>
<keyword id="KW-0560">Oxidoreductase</keyword>